<organism>
    <name type="scientific">Staphylococcus aureus (strain USA300 / TCH1516)</name>
    <dbReference type="NCBI Taxonomy" id="451516"/>
    <lineage>
        <taxon>Bacteria</taxon>
        <taxon>Bacillati</taxon>
        <taxon>Bacillota</taxon>
        <taxon>Bacilli</taxon>
        <taxon>Bacillales</taxon>
        <taxon>Staphylococcaceae</taxon>
        <taxon>Staphylococcus</taxon>
    </lineage>
</organism>
<dbReference type="EMBL" id="CP000730">
    <property type="protein sequence ID" value="ABX30094.1"/>
    <property type="molecule type" value="Genomic_DNA"/>
</dbReference>
<dbReference type="RefSeq" id="WP_000140679.1">
    <property type="nucleotide sequence ID" value="NC_010079.1"/>
</dbReference>
<dbReference type="SMR" id="A8YY74"/>
<dbReference type="KEGG" id="sax:USA300HOU_2097"/>
<dbReference type="HOGENOM" id="CLU_079215_4_2_9"/>
<dbReference type="GO" id="GO:0005886">
    <property type="term" value="C:plasma membrane"/>
    <property type="evidence" value="ECO:0007669"/>
    <property type="project" value="UniProtKB-SubCell"/>
</dbReference>
<dbReference type="GO" id="GO:0045259">
    <property type="term" value="C:proton-transporting ATP synthase complex"/>
    <property type="evidence" value="ECO:0007669"/>
    <property type="project" value="UniProtKB-KW"/>
</dbReference>
<dbReference type="GO" id="GO:0046933">
    <property type="term" value="F:proton-transporting ATP synthase activity, rotational mechanism"/>
    <property type="evidence" value="ECO:0007669"/>
    <property type="project" value="UniProtKB-UniRule"/>
</dbReference>
<dbReference type="GO" id="GO:0046961">
    <property type="term" value="F:proton-transporting ATPase activity, rotational mechanism"/>
    <property type="evidence" value="ECO:0007669"/>
    <property type="project" value="TreeGrafter"/>
</dbReference>
<dbReference type="CDD" id="cd06503">
    <property type="entry name" value="ATP-synt_Fo_b"/>
    <property type="match status" value="1"/>
</dbReference>
<dbReference type="HAMAP" id="MF_01398">
    <property type="entry name" value="ATP_synth_b_bprime"/>
    <property type="match status" value="1"/>
</dbReference>
<dbReference type="InterPro" id="IPR028987">
    <property type="entry name" value="ATP_synth_B-like_membr_sf"/>
</dbReference>
<dbReference type="InterPro" id="IPR002146">
    <property type="entry name" value="ATP_synth_b/b'su_bac/chlpt"/>
</dbReference>
<dbReference type="InterPro" id="IPR005864">
    <property type="entry name" value="ATP_synth_F0_bsu_bac"/>
</dbReference>
<dbReference type="InterPro" id="IPR050059">
    <property type="entry name" value="ATP_synthase_B_chain"/>
</dbReference>
<dbReference type="NCBIfam" id="TIGR01144">
    <property type="entry name" value="ATP_synt_b"/>
    <property type="match status" value="1"/>
</dbReference>
<dbReference type="NCBIfam" id="NF009987">
    <property type="entry name" value="PRK13453.1"/>
    <property type="match status" value="1"/>
</dbReference>
<dbReference type="PANTHER" id="PTHR33445:SF1">
    <property type="entry name" value="ATP SYNTHASE SUBUNIT B"/>
    <property type="match status" value="1"/>
</dbReference>
<dbReference type="PANTHER" id="PTHR33445">
    <property type="entry name" value="ATP SYNTHASE SUBUNIT B', CHLOROPLASTIC"/>
    <property type="match status" value="1"/>
</dbReference>
<dbReference type="Pfam" id="PF00430">
    <property type="entry name" value="ATP-synt_B"/>
    <property type="match status" value="1"/>
</dbReference>
<dbReference type="SUPFAM" id="SSF81573">
    <property type="entry name" value="F1F0 ATP synthase subunit B, membrane domain"/>
    <property type="match status" value="1"/>
</dbReference>
<sequence>MTETANLFVLGAAGGVEWGTVIVQVLTFIVLLALLKKFAWGPLKDVMDKRERDINRDIDDAEQAKLNAQKLEEENKQKLKETQEEVQKILEDAKVQARQQQEQIIHEANVRANGMIETAQSEINSQKERAIADINNQVSELSVLIASKVLRKEISEQDQKALVDKYLKEAGDK</sequence>
<evidence type="ECO:0000255" key="1">
    <source>
        <dbReference type="HAMAP-Rule" id="MF_01398"/>
    </source>
</evidence>
<comment type="function">
    <text evidence="1">F(1)F(0) ATP synthase produces ATP from ADP in the presence of a proton or sodium gradient. F-type ATPases consist of two structural domains, F(1) containing the extramembraneous catalytic core and F(0) containing the membrane proton channel, linked together by a central stalk and a peripheral stalk. During catalysis, ATP synthesis in the catalytic domain of F(1) is coupled via a rotary mechanism of the central stalk subunits to proton translocation.</text>
</comment>
<comment type="function">
    <text evidence="1">Component of the F(0) channel, it forms part of the peripheral stalk, linking F(1) to F(0).</text>
</comment>
<comment type="subunit">
    <text evidence="1">F-type ATPases have 2 components, F(1) - the catalytic core - and F(0) - the membrane proton channel. F(1) has five subunits: alpha(3), beta(3), gamma(1), delta(1), epsilon(1). F(0) has three main subunits: a(1), b(2) and c(10-14). The alpha and beta chains form an alternating ring which encloses part of the gamma chain. F(1) is attached to F(0) by a central stalk formed by the gamma and epsilon chains, while a peripheral stalk is formed by the delta and b chains.</text>
</comment>
<comment type="subcellular location">
    <subcellularLocation>
        <location evidence="1">Cell membrane</location>
        <topology evidence="1">Single-pass membrane protein</topology>
    </subcellularLocation>
</comment>
<comment type="similarity">
    <text evidence="1">Belongs to the ATPase B chain family.</text>
</comment>
<reference key="1">
    <citation type="journal article" date="2007" name="BMC Microbiol.">
        <title>Subtle genetic changes enhance virulence of methicillin resistant and sensitive Staphylococcus aureus.</title>
        <authorList>
            <person name="Highlander S.K."/>
            <person name="Hulten K.G."/>
            <person name="Qin X."/>
            <person name="Jiang H."/>
            <person name="Yerrapragada S."/>
            <person name="Mason E.O. Jr."/>
            <person name="Shang Y."/>
            <person name="Williams T.M."/>
            <person name="Fortunov R.M."/>
            <person name="Liu Y."/>
            <person name="Igboeli O."/>
            <person name="Petrosino J."/>
            <person name="Tirumalai M."/>
            <person name="Uzman A."/>
            <person name="Fox G.E."/>
            <person name="Cardenas A.M."/>
            <person name="Muzny D.M."/>
            <person name="Hemphill L."/>
            <person name="Ding Y."/>
            <person name="Dugan S."/>
            <person name="Blyth P.R."/>
            <person name="Buhay C.J."/>
            <person name="Dinh H.H."/>
            <person name="Hawes A.C."/>
            <person name="Holder M."/>
            <person name="Kovar C.L."/>
            <person name="Lee S.L."/>
            <person name="Liu W."/>
            <person name="Nazareth L.V."/>
            <person name="Wang Q."/>
            <person name="Zhou J."/>
            <person name="Kaplan S.L."/>
            <person name="Weinstock G.M."/>
        </authorList>
    </citation>
    <scope>NUCLEOTIDE SEQUENCE [LARGE SCALE GENOMIC DNA]</scope>
    <source>
        <strain>USA300 / TCH1516</strain>
    </source>
</reference>
<name>ATPF_STAAT</name>
<keyword id="KW-0066">ATP synthesis</keyword>
<keyword id="KW-1003">Cell membrane</keyword>
<keyword id="KW-0138">CF(0)</keyword>
<keyword id="KW-0375">Hydrogen ion transport</keyword>
<keyword id="KW-0406">Ion transport</keyword>
<keyword id="KW-0472">Membrane</keyword>
<keyword id="KW-0812">Transmembrane</keyword>
<keyword id="KW-1133">Transmembrane helix</keyword>
<keyword id="KW-0813">Transport</keyword>
<gene>
    <name evidence="1" type="primary">atpF</name>
    <name type="ordered locus">USA300HOU_2097</name>
</gene>
<protein>
    <recommendedName>
        <fullName evidence="1">ATP synthase subunit b</fullName>
    </recommendedName>
    <alternativeName>
        <fullName evidence="1">ATP synthase F(0) sector subunit b</fullName>
    </alternativeName>
    <alternativeName>
        <fullName evidence="1">ATPase subunit I</fullName>
    </alternativeName>
    <alternativeName>
        <fullName evidence="1">F-type ATPase subunit b</fullName>
        <shortName evidence="1">F-ATPase subunit b</shortName>
    </alternativeName>
</protein>
<proteinExistence type="inferred from homology"/>
<accession>A8YY74</accession>
<feature type="chain" id="PRO_0000368788" description="ATP synthase subunit b">
    <location>
        <begin position="1"/>
        <end position="173"/>
    </location>
</feature>
<feature type="transmembrane region" description="Helical" evidence="1">
    <location>
        <begin position="15"/>
        <end position="35"/>
    </location>
</feature>